<keyword id="KW-0106">Calcium</keyword>
<keyword id="KW-0449">Lipoprotein</keyword>
<keyword id="KW-0479">Metal-binding</keyword>
<keyword id="KW-0519">Myristate</keyword>
<keyword id="KW-1185">Reference proteome</keyword>
<keyword id="KW-0677">Repeat</keyword>
<organism>
    <name type="scientific">Taeniopygia guttata</name>
    <name type="common">Zebra finch</name>
    <name type="synonym">Poephila guttata</name>
    <dbReference type="NCBI Taxonomy" id="59729"/>
    <lineage>
        <taxon>Eukaryota</taxon>
        <taxon>Metazoa</taxon>
        <taxon>Chordata</taxon>
        <taxon>Craniata</taxon>
        <taxon>Vertebrata</taxon>
        <taxon>Euteleostomi</taxon>
        <taxon>Archelosauria</taxon>
        <taxon>Archosauria</taxon>
        <taxon>Dinosauria</taxon>
        <taxon>Saurischia</taxon>
        <taxon>Theropoda</taxon>
        <taxon>Coelurosauria</taxon>
        <taxon>Aves</taxon>
        <taxon>Neognathae</taxon>
        <taxon>Neoaves</taxon>
        <taxon>Telluraves</taxon>
        <taxon>Australaves</taxon>
        <taxon>Passeriformes</taxon>
        <taxon>Passeroidea</taxon>
        <taxon>Estrildidae</taxon>
        <taxon>Estrildinae</taxon>
        <taxon>Taeniopygia</taxon>
    </lineage>
</organism>
<evidence type="ECO:0000250" key="1"/>
<evidence type="ECO:0000255" key="2"/>
<evidence type="ECO:0000255" key="3">
    <source>
        <dbReference type="PROSITE-ProRule" id="PRU00448"/>
    </source>
</evidence>
<evidence type="ECO:0000305" key="4"/>
<proteinExistence type="evidence at transcript level"/>
<reference key="1">
    <citation type="journal article" date="2006" name="Proc. Natl. Acad. Sci. U.S.A.">
        <title>A molecular neuroethological approach for identifying and characterizing a cascade of behaviorally regulated genes.</title>
        <authorList>
            <person name="Wada K."/>
            <person name="Howard J.T."/>
            <person name="McConnell P."/>
            <person name="Whitney O."/>
            <person name="Lints T."/>
            <person name="Rivas M.V."/>
            <person name="Horita H."/>
            <person name="Patterson M.A."/>
            <person name="White S.A."/>
            <person name="Scharff C."/>
            <person name="Haesler S."/>
            <person name="Zhao S."/>
            <person name="Sakaguchi H."/>
            <person name="Hagiwara M."/>
            <person name="Shiraki T."/>
            <person name="Hirozane-Kishikawa T."/>
            <person name="Skene P."/>
            <person name="Hayashizaki Y."/>
            <person name="Carninci P."/>
            <person name="Jarvis E.D."/>
        </authorList>
    </citation>
    <scope>NUCLEOTIDE SEQUENCE [LARGE SCALE MRNA]</scope>
    <source>
        <tissue>Brain</tissue>
    </source>
</reference>
<dbReference type="EMBL" id="DQ214353">
    <property type="protein sequence ID" value="ACH44345.1"/>
    <property type="molecule type" value="mRNA"/>
</dbReference>
<dbReference type="EMBL" id="DQ214354">
    <property type="protein sequence ID" value="ACH44346.1"/>
    <property type="molecule type" value="mRNA"/>
</dbReference>
<dbReference type="RefSeq" id="NP_001157825.1">
    <property type="nucleotide sequence ID" value="NM_001164353.1"/>
</dbReference>
<dbReference type="RefSeq" id="XP_012428220.1">
    <property type="nucleotide sequence ID" value="XM_012572766.1"/>
</dbReference>
<dbReference type="RefSeq" id="XP_012428221.1">
    <property type="nucleotide sequence ID" value="XM_012572767.1"/>
</dbReference>
<dbReference type="RefSeq" id="XP_012428222.1">
    <property type="nucleotide sequence ID" value="XM_012572768.1"/>
</dbReference>
<dbReference type="RefSeq" id="XP_012428223.1">
    <property type="nucleotide sequence ID" value="XM_012572769.1"/>
</dbReference>
<dbReference type="RefSeq" id="XP_030123081.1">
    <property type="nucleotide sequence ID" value="XM_030267221.3"/>
</dbReference>
<dbReference type="RefSeq" id="XP_030123082.1">
    <property type="nucleotide sequence ID" value="XM_030267222.3"/>
</dbReference>
<dbReference type="RefSeq" id="XP_032603092.1">
    <property type="nucleotide sequence ID" value="XM_032747201.2"/>
</dbReference>
<dbReference type="SMR" id="B5FZ84"/>
<dbReference type="FunCoup" id="B5FZ84">
    <property type="interactions" value="764"/>
</dbReference>
<dbReference type="STRING" id="59729.ENSTGUP00000013431"/>
<dbReference type="Ensembl" id="ENSTGUT00000013584.2">
    <property type="protein sequence ID" value="ENSTGUP00000013431.1"/>
    <property type="gene ID" value="ENSTGUG00000013044.2"/>
</dbReference>
<dbReference type="GeneID" id="100190241"/>
<dbReference type="KEGG" id="tgu:100190241"/>
<dbReference type="CTD" id="3241"/>
<dbReference type="GeneTree" id="ENSGT00940000154645"/>
<dbReference type="HOGENOM" id="CLU_072366_1_0_1"/>
<dbReference type="InParanoid" id="B5FZ84"/>
<dbReference type="OMA" id="RQHTEFN"/>
<dbReference type="OrthoDB" id="191686at2759"/>
<dbReference type="TreeFam" id="TF300009"/>
<dbReference type="Proteomes" id="UP000007754">
    <property type="component" value="Chromosome 3"/>
</dbReference>
<dbReference type="GO" id="GO:0005509">
    <property type="term" value="F:calcium ion binding"/>
    <property type="evidence" value="ECO:0007669"/>
    <property type="project" value="InterPro"/>
</dbReference>
<dbReference type="CDD" id="cd00051">
    <property type="entry name" value="EFh"/>
    <property type="match status" value="2"/>
</dbReference>
<dbReference type="FunFam" id="1.10.238.10:FF:000078">
    <property type="entry name" value="Hippocalcin-like 1"/>
    <property type="match status" value="1"/>
</dbReference>
<dbReference type="FunFam" id="1.10.238.10:FF:000072">
    <property type="entry name" value="Hippocalcin-like protein 1"/>
    <property type="match status" value="1"/>
</dbReference>
<dbReference type="Gene3D" id="1.10.238.10">
    <property type="entry name" value="EF-hand"/>
    <property type="match status" value="2"/>
</dbReference>
<dbReference type="InterPro" id="IPR011992">
    <property type="entry name" value="EF-hand-dom_pair"/>
</dbReference>
<dbReference type="InterPro" id="IPR018247">
    <property type="entry name" value="EF_Hand_1_Ca_BS"/>
</dbReference>
<dbReference type="InterPro" id="IPR002048">
    <property type="entry name" value="EF_hand_dom"/>
</dbReference>
<dbReference type="InterPro" id="IPR028846">
    <property type="entry name" value="Recoverin"/>
</dbReference>
<dbReference type="PANTHER" id="PTHR23055">
    <property type="entry name" value="CALCIUM BINDING PROTEINS"/>
    <property type="match status" value="1"/>
</dbReference>
<dbReference type="PANTHER" id="PTHR23055:SF79">
    <property type="entry name" value="HIPPOCALCIN-LIKE PROTEIN 1"/>
    <property type="match status" value="1"/>
</dbReference>
<dbReference type="Pfam" id="PF13499">
    <property type="entry name" value="EF-hand_7"/>
    <property type="match status" value="2"/>
</dbReference>
<dbReference type="PRINTS" id="PR00450">
    <property type="entry name" value="RECOVERIN"/>
</dbReference>
<dbReference type="SMART" id="SM00054">
    <property type="entry name" value="EFh"/>
    <property type="match status" value="3"/>
</dbReference>
<dbReference type="SUPFAM" id="SSF47473">
    <property type="entry name" value="EF-hand"/>
    <property type="match status" value="1"/>
</dbReference>
<dbReference type="PROSITE" id="PS00018">
    <property type="entry name" value="EF_HAND_1"/>
    <property type="match status" value="3"/>
</dbReference>
<dbReference type="PROSITE" id="PS50222">
    <property type="entry name" value="EF_HAND_2"/>
    <property type="match status" value="4"/>
</dbReference>
<sequence>MGKQNSKLRPEVLQDLRENTEFTDHELQEWYKGFLKDCPTGHLTVEEFKKIYANFFPYGDASKFAEHVFRTFDTNGDGTIDFREFIIALSVTSRGKLEQKLKWAFSMYDLDGNGYISRGEMLEIVQAIYKMVSSVMKMPEDESTPEKRTDKIFRQMDTNNDGKLSLEEFIKGAKSDPSIVRLLQCDPSSASQF</sequence>
<comment type="miscellaneous">
    <text evidence="1">Probably binds two or three calcium ions.</text>
</comment>
<comment type="similarity">
    <text evidence="4">Belongs to the recoverin family.</text>
</comment>
<gene>
    <name type="primary">HPCAL1</name>
</gene>
<protein>
    <recommendedName>
        <fullName>Hippocalcin-like protein 1</fullName>
    </recommendedName>
</protein>
<accession>B5FZ84</accession>
<feature type="initiator methionine" description="Removed" evidence="2">
    <location>
        <position position="1"/>
    </location>
</feature>
<feature type="chain" id="PRO_0000362077" description="Hippocalcin-like protein 1">
    <location>
        <begin position="2"/>
        <end position="193"/>
    </location>
</feature>
<feature type="domain" description="EF-hand 1" evidence="3">
    <location>
        <begin position="41"/>
        <end position="58"/>
    </location>
</feature>
<feature type="domain" description="EF-hand 2" evidence="3">
    <location>
        <begin position="60"/>
        <end position="95"/>
    </location>
</feature>
<feature type="domain" description="EF-hand 3" evidence="3">
    <location>
        <begin position="96"/>
        <end position="131"/>
    </location>
</feature>
<feature type="domain" description="EF-hand 4" evidence="3">
    <location>
        <begin position="144"/>
        <end position="179"/>
    </location>
</feature>
<feature type="binding site" evidence="3">
    <location>
        <position position="73"/>
    </location>
    <ligand>
        <name>Ca(2+)</name>
        <dbReference type="ChEBI" id="CHEBI:29108"/>
        <label>1</label>
    </ligand>
</feature>
<feature type="binding site" evidence="3">
    <location>
        <position position="75"/>
    </location>
    <ligand>
        <name>Ca(2+)</name>
        <dbReference type="ChEBI" id="CHEBI:29108"/>
        <label>1</label>
    </ligand>
</feature>
<feature type="binding site" evidence="3">
    <location>
        <position position="77"/>
    </location>
    <ligand>
        <name>Ca(2+)</name>
        <dbReference type="ChEBI" id="CHEBI:29108"/>
        <label>1</label>
    </ligand>
</feature>
<feature type="binding site" evidence="3">
    <location>
        <position position="79"/>
    </location>
    <ligand>
        <name>Ca(2+)</name>
        <dbReference type="ChEBI" id="CHEBI:29108"/>
        <label>1</label>
    </ligand>
</feature>
<feature type="binding site" evidence="3">
    <location>
        <position position="84"/>
    </location>
    <ligand>
        <name>Ca(2+)</name>
        <dbReference type="ChEBI" id="CHEBI:29108"/>
        <label>1</label>
    </ligand>
</feature>
<feature type="binding site" evidence="3">
    <location>
        <position position="109"/>
    </location>
    <ligand>
        <name>Ca(2+)</name>
        <dbReference type="ChEBI" id="CHEBI:29108"/>
        <label>2</label>
    </ligand>
</feature>
<feature type="binding site" evidence="3">
    <location>
        <position position="111"/>
    </location>
    <ligand>
        <name>Ca(2+)</name>
        <dbReference type="ChEBI" id="CHEBI:29108"/>
        <label>2</label>
    </ligand>
</feature>
<feature type="binding site" evidence="3">
    <location>
        <position position="113"/>
    </location>
    <ligand>
        <name>Ca(2+)</name>
        <dbReference type="ChEBI" id="CHEBI:29108"/>
        <label>2</label>
    </ligand>
</feature>
<feature type="binding site" evidence="3">
    <location>
        <position position="115"/>
    </location>
    <ligand>
        <name>Ca(2+)</name>
        <dbReference type="ChEBI" id="CHEBI:29108"/>
        <label>2</label>
    </ligand>
</feature>
<feature type="binding site" evidence="3">
    <location>
        <position position="120"/>
    </location>
    <ligand>
        <name>Ca(2+)</name>
        <dbReference type="ChEBI" id="CHEBI:29108"/>
        <label>2</label>
    </ligand>
</feature>
<feature type="binding site" evidence="3">
    <location>
        <position position="157"/>
    </location>
    <ligand>
        <name>Ca(2+)</name>
        <dbReference type="ChEBI" id="CHEBI:29108"/>
        <label>3</label>
    </ligand>
</feature>
<feature type="binding site" evidence="3">
    <location>
        <position position="159"/>
    </location>
    <ligand>
        <name>Ca(2+)</name>
        <dbReference type="ChEBI" id="CHEBI:29108"/>
        <label>3</label>
    </ligand>
</feature>
<feature type="binding site" evidence="3">
    <location>
        <position position="161"/>
    </location>
    <ligand>
        <name>Ca(2+)</name>
        <dbReference type="ChEBI" id="CHEBI:29108"/>
        <label>3</label>
    </ligand>
</feature>
<feature type="binding site" evidence="3">
    <location>
        <position position="163"/>
    </location>
    <ligand>
        <name>Ca(2+)</name>
        <dbReference type="ChEBI" id="CHEBI:29108"/>
        <label>3</label>
    </ligand>
</feature>
<feature type="binding site" evidence="3">
    <location>
        <position position="168"/>
    </location>
    <ligand>
        <name>Ca(2+)</name>
        <dbReference type="ChEBI" id="CHEBI:29108"/>
        <label>3</label>
    </ligand>
</feature>
<feature type="lipid moiety-binding region" description="N-myristoyl glycine" evidence="2">
    <location>
        <position position="2"/>
    </location>
</feature>
<name>HPCL1_TAEGU</name>